<protein>
    <recommendedName>
        <fullName evidence="1">tRNA-2-methylthio-N(6)-dimethylallyladenosine synthase</fullName>
        <ecNumber evidence="1">2.8.4.3</ecNumber>
    </recommendedName>
    <alternativeName>
        <fullName evidence="1">(Dimethylallyl)adenosine tRNA methylthiotransferase MiaB</fullName>
    </alternativeName>
    <alternativeName>
        <fullName evidence="1">tRNA-i(6)A37 methylthiotransferase</fullName>
    </alternativeName>
</protein>
<evidence type="ECO:0000255" key="1">
    <source>
        <dbReference type="HAMAP-Rule" id="MF_01864"/>
    </source>
</evidence>
<evidence type="ECO:0000255" key="2">
    <source>
        <dbReference type="PROSITE-ProRule" id="PRU01266"/>
    </source>
</evidence>
<accession>Q4QPM5</accession>
<proteinExistence type="inferred from homology"/>
<keyword id="KW-0004">4Fe-4S</keyword>
<keyword id="KW-0963">Cytoplasm</keyword>
<keyword id="KW-0408">Iron</keyword>
<keyword id="KW-0411">Iron-sulfur</keyword>
<keyword id="KW-0479">Metal-binding</keyword>
<keyword id="KW-0949">S-adenosyl-L-methionine</keyword>
<keyword id="KW-0808">Transferase</keyword>
<keyword id="KW-0819">tRNA processing</keyword>
<name>MIAB_HAEI8</name>
<reference key="1">
    <citation type="journal article" date="2005" name="J. Bacteriol.">
        <title>Genomic sequence of an otitis media isolate of nontypeable Haemophilus influenzae: comparative study with H. influenzae serotype d, strain KW20.</title>
        <authorList>
            <person name="Harrison A."/>
            <person name="Dyer D.W."/>
            <person name="Gillaspy A."/>
            <person name="Ray W.C."/>
            <person name="Mungur R."/>
            <person name="Carson M.B."/>
            <person name="Zhong H."/>
            <person name="Gipson J."/>
            <person name="Gipson M."/>
            <person name="Johnson L.S."/>
            <person name="Lewis L."/>
            <person name="Bakaletz L.O."/>
            <person name="Munson R.S. Jr."/>
        </authorList>
    </citation>
    <scope>NUCLEOTIDE SEQUENCE [LARGE SCALE GENOMIC DNA]</scope>
    <source>
        <strain>86-028NP</strain>
    </source>
</reference>
<sequence>MTQKLHIKTWGCQMNEYDSSKMADLLLSTHGLELTEAPEEADVLLLNTCSIREKAQEKVFHQLGRWKELKKNNPNLVIGVGGCVASQEGEHIRHRAPYVDIIFGPQTLHRLPEMINQIRGGKSSVVDVSFPEIEKFDRLPEPRAEGPTAFVSIMEGCNKYCTFCVVPYTRGEEVSRPVDDVLFEIAQLAEQGVREVNLLGQNVNAYRGPTHDGQICSFAELLRLVASIDGIDRLRFTTSHPIEFTNDIIDVYRDTPELVSFLHLPVQAGSDRVLTMMKRGHTALEYKSIIRKLRAVRPDIQISSDFIVGFPGETAEDFEQTMNLIAQVNFDMSFSFVYSARPGTPAADMPDDVTEDEKKQRLYVLQERINQQAAQFSRRMLGTEQRVLVEGPSKKDIMELTGRTETNRIVNFQGSPEMIGKFVDVKITDVYTNSLRGEVVRTEDEMGLRIAQSPQEVMNRTRKEDELGVGRYHG</sequence>
<organism>
    <name type="scientific">Haemophilus influenzae (strain 86-028NP)</name>
    <dbReference type="NCBI Taxonomy" id="281310"/>
    <lineage>
        <taxon>Bacteria</taxon>
        <taxon>Pseudomonadati</taxon>
        <taxon>Pseudomonadota</taxon>
        <taxon>Gammaproteobacteria</taxon>
        <taxon>Pasteurellales</taxon>
        <taxon>Pasteurellaceae</taxon>
        <taxon>Haemophilus</taxon>
    </lineage>
</organism>
<feature type="chain" id="PRO_0000374328" description="tRNA-2-methylthio-N(6)-dimethylallyladenosine synthase">
    <location>
        <begin position="1"/>
        <end position="474"/>
    </location>
</feature>
<feature type="domain" description="MTTase N-terminal" evidence="1">
    <location>
        <begin position="3"/>
        <end position="120"/>
    </location>
</feature>
<feature type="domain" description="Radical SAM core" evidence="2">
    <location>
        <begin position="143"/>
        <end position="375"/>
    </location>
</feature>
<feature type="domain" description="TRAM" evidence="1">
    <location>
        <begin position="378"/>
        <end position="441"/>
    </location>
</feature>
<feature type="binding site" evidence="1">
    <location>
        <position position="12"/>
    </location>
    <ligand>
        <name>[4Fe-4S] cluster</name>
        <dbReference type="ChEBI" id="CHEBI:49883"/>
        <label>1</label>
    </ligand>
</feature>
<feature type="binding site" evidence="1">
    <location>
        <position position="49"/>
    </location>
    <ligand>
        <name>[4Fe-4S] cluster</name>
        <dbReference type="ChEBI" id="CHEBI:49883"/>
        <label>1</label>
    </ligand>
</feature>
<feature type="binding site" evidence="1">
    <location>
        <position position="83"/>
    </location>
    <ligand>
        <name>[4Fe-4S] cluster</name>
        <dbReference type="ChEBI" id="CHEBI:49883"/>
        <label>1</label>
    </ligand>
</feature>
<feature type="binding site" evidence="1">
    <location>
        <position position="157"/>
    </location>
    <ligand>
        <name>[4Fe-4S] cluster</name>
        <dbReference type="ChEBI" id="CHEBI:49883"/>
        <label>2</label>
        <note>4Fe-4S-S-AdoMet</note>
    </ligand>
</feature>
<feature type="binding site" evidence="1">
    <location>
        <position position="161"/>
    </location>
    <ligand>
        <name>[4Fe-4S] cluster</name>
        <dbReference type="ChEBI" id="CHEBI:49883"/>
        <label>2</label>
        <note>4Fe-4S-S-AdoMet</note>
    </ligand>
</feature>
<feature type="binding site" evidence="1">
    <location>
        <position position="164"/>
    </location>
    <ligand>
        <name>[4Fe-4S] cluster</name>
        <dbReference type="ChEBI" id="CHEBI:49883"/>
        <label>2</label>
        <note>4Fe-4S-S-AdoMet</note>
    </ligand>
</feature>
<dbReference type="EC" id="2.8.4.3" evidence="1"/>
<dbReference type="EMBL" id="CP000057">
    <property type="protein sequence ID" value="AAX87022.1"/>
    <property type="molecule type" value="Genomic_DNA"/>
</dbReference>
<dbReference type="RefSeq" id="WP_005687460.1">
    <property type="nucleotide sequence ID" value="NC_007146.2"/>
</dbReference>
<dbReference type="SMR" id="Q4QPM5"/>
<dbReference type="KEGG" id="hit:NTHI0026"/>
<dbReference type="HOGENOM" id="CLU_018697_2_0_6"/>
<dbReference type="Proteomes" id="UP000002525">
    <property type="component" value="Chromosome"/>
</dbReference>
<dbReference type="GO" id="GO:0005829">
    <property type="term" value="C:cytosol"/>
    <property type="evidence" value="ECO:0007669"/>
    <property type="project" value="TreeGrafter"/>
</dbReference>
<dbReference type="GO" id="GO:0051539">
    <property type="term" value="F:4 iron, 4 sulfur cluster binding"/>
    <property type="evidence" value="ECO:0007669"/>
    <property type="project" value="UniProtKB-UniRule"/>
</dbReference>
<dbReference type="GO" id="GO:0046872">
    <property type="term" value="F:metal ion binding"/>
    <property type="evidence" value="ECO:0007669"/>
    <property type="project" value="UniProtKB-KW"/>
</dbReference>
<dbReference type="GO" id="GO:0035597">
    <property type="term" value="F:N6-isopentenyladenosine methylthiotransferase activity"/>
    <property type="evidence" value="ECO:0007669"/>
    <property type="project" value="TreeGrafter"/>
</dbReference>
<dbReference type="CDD" id="cd01335">
    <property type="entry name" value="Radical_SAM"/>
    <property type="match status" value="1"/>
</dbReference>
<dbReference type="FunFam" id="3.40.50.12160:FF:000001">
    <property type="entry name" value="tRNA-2-methylthio-N(6)-dimethylallyladenosine synthase"/>
    <property type="match status" value="1"/>
</dbReference>
<dbReference type="FunFam" id="3.80.30.20:FF:000001">
    <property type="entry name" value="tRNA-2-methylthio-N(6)-dimethylallyladenosine synthase 2"/>
    <property type="match status" value="1"/>
</dbReference>
<dbReference type="Gene3D" id="3.40.50.12160">
    <property type="entry name" value="Methylthiotransferase, N-terminal domain"/>
    <property type="match status" value="1"/>
</dbReference>
<dbReference type="Gene3D" id="3.80.30.20">
    <property type="entry name" value="tm_1862 like domain"/>
    <property type="match status" value="1"/>
</dbReference>
<dbReference type="HAMAP" id="MF_01864">
    <property type="entry name" value="tRNA_metthiotr_MiaB"/>
    <property type="match status" value="1"/>
</dbReference>
<dbReference type="InterPro" id="IPR006638">
    <property type="entry name" value="Elp3/MiaA/NifB-like_rSAM"/>
</dbReference>
<dbReference type="InterPro" id="IPR005839">
    <property type="entry name" value="Methylthiotransferase"/>
</dbReference>
<dbReference type="InterPro" id="IPR020612">
    <property type="entry name" value="Methylthiotransferase_CS"/>
</dbReference>
<dbReference type="InterPro" id="IPR013848">
    <property type="entry name" value="Methylthiotransferase_N"/>
</dbReference>
<dbReference type="InterPro" id="IPR038135">
    <property type="entry name" value="Methylthiotransferase_N_sf"/>
</dbReference>
<dbReference type="InterPro" id="IPR006463">
    <property type="entry name" value="MiaB_methiolase"/>
</dbReference>
<dbReference type="InterPro" id="IPR007197">
    <property type="entry name" value="rSAM"/>
</dbReference>
<dbReference type="InterPro" id="IPR023404">
    <property type="entry name" value="rSAM_horseshoe"/>
</dbReference>
<dbReference type="InterPro" id="IPR002792">
    <property type="entry name" value="TRAM_dom"/>
</dbReference>
<dbReference type="NCBIfam" id="TIGR01574">
    <property type="entry name" value="miaB-methiolase"/>
    <property type="match status" value="1"/>
</dbReference>
<dbReference type="NCBIfam" id="TIGR00089">
    <property type="entry name" value="MiaB/RimO family radical SAM methylthiotransferase"/>
    <property type="match status" value="1"/>
</dbReference>
<dbReference type="PANTHER" id="PTHR43020">
    <property type="entry name" value="CDK5 REGULATORY SUBUNIT-ASSOCIATED PROTEIN 1"/>
    <property type="match status" value="1"/>
</dbReference>
<dbReference type="PANTHER" id="PTHR43020:SF2">
    <property type="entry name" value="MITOCHONDRIAL TRNA METHYLTHIOTRANSFERASE CDK5RAP1"/>
    <property type="match status" value="1"/>
</dbReference>
<dbReference type="Pfam" id="PF04055">
    <property type="entry name" value="Radical_SAM"/>
    <property type="match status" value="1"/>
</dbReference>
<dbReference type="Pfam" id="PF01938">
    <property type="entry name" value="TRAM"/>
    <property type="match status" value="1"/>
</dbReference>
<dbReference type="Pfam" id="PF00919">
    <property type="entry name" value="UPF0004"/>
    <property type="match status" value="1"/>
</dbReference>
<dbReference type="SFLD" id="SFLDF00273">
    <property type="entry name" value="(dimethylallyl)adenosine_tRNA"/>
    <property type="match status" value="1"/>
</dbReference>
<dbReference type="SFLD" id="SFLDG01082">
    <property type="entry name" value="B12-binding_domain_containing"/>
    <property type="match status" value="1"/>
</dbReference>
<dbReference type="SFLD" id="SFLDS00029">
    <property type="entry name" value="Radical_SAM"/>
    <property type="match status" value="1"/>
</dbReference>
<dbReference type="SMART" id="SM00729">
    <property type="entry name" value="Elp3"/>
    <property type="match status" value="1"/>
</dbReference>
<dbReference type="SUPFAM" id="SSF102114">
    <property type="entry name" value="Radical SAM enzymes"/>
    <property type="match status" value="1"/>
</dbReference>
<dbReference type="PROSITE" id="PS51449">
    <property type="entry name" value="MTTASE_N"/>
    <property type="match status" value="1"/>
</dbReference>
<dbReference type="PROSITE" id="PS01278">
    <property type="entry name" value="MTTASE_RADICAL"/>
    <property type="match status" value="1"/>
</dbReference>
<dbReference type="PROSITE" id="PS51918">
    <property type="entry name" value="RADICAL_SAM"/>
    <property type="match status" value="1"/>
</dbReference>
<dbReference type="PROSITE" id="PS50926">
    <property type="entry name" value="TRAM"/>
    <property type="match status" value="1"/>
</dbReference>
<comment type="function">
    <text evidence="1">Catalyzes the methylthiolation of N6-(dimethylallyl)adenosine (i(6)A), leading to the formation of 2-methylthio-N6-(dimethylallyl)adenosine (ms(2)i(6)A) at position 37 in tRNAs that read codons beginning with uridine.</text>
</comment>
<comment type="catalytic activity">
    <reaction evidence="1">
        <text>N(6)-dimethylallyladenosine(37) in tRNA + (sulfur carrier)-SH + AH2 + 2 S-adenosyl-L-methionine = 2-methylsulfanyl-N(6)-dimethylallyladenosine(37) in tRNA + (sulfur carrier)-H + 5'-deoxyadenosine + L-methionine + A + S-adenosyl-L-homocysteine + 2 H(+)</text>
        <dbReference type="Rhea" id="RHEA:37067"/>
        <dbReference type="Rhea" id="RHEA-COMP:10375"/>
        <dbReference type="Rhea" id="RHEA-COMP:10376"/>
        <dbReference type="Rhea" id="RHEA-COMP:14737"/>
        <dbReference type="Rhea" id="RHEA-COMP:14739"/>
        <dbReference type="ChEBI" id="CHEBI:13193"/>
        <dbReference type="ChEBI" id="CHEBI:15378"/>
        <dbReference type="ChEBI" id="CHEBI:17319"/>
        <dbReference type="ChEBI" id="CHEBI:17499"/>
        <dbReference type="ChEBI" id="CHEBI:29917"/>
        <dbReference type="ChEBI" id="CHEBI:57844"/>
        <dbReference type="ChEBI" id="CHEBI:57856"/>
        <dbReference type="ChEBI" id="CHEBI:59789"/>
        <dbReference type="ChEBI" id="CHEBI:64428"/>
        <dbReference type="ChEBI" id="CHEBI:74415"/>
        <dbReference type="ChEBI" id="CHEBI:74417"/>
        <dbReference type="EC" id="2.8.4.3"/>
    </reaction>
</comment>
<comment type="cofactor">
    <cofactor evidence="1">
        <name>[4Fe-4S] cluster</name>
        <dbReference type="ChEBI" id="CHEBI:49883"/>
    </cofactor>
    <text evidence="1">Binds 2 [4Fe-4S] clusters. One cluster is coordinated with 3 cysteines and an exchangeable S-adenosyl-L-methionine.</text>
</comment>
<comment type="subunit">
    <text evidence="1">Monomer.</text>
</comment>
<comment type="subcellular location">
    <subcellularLocation>
        <location evidence="1">Cytoplasm</location>
    </subcellularLocation>
</comment>
<comment type="similarity">
    <text evidence="1">Belongs to the methylthiotransferase family. MiaB subfamily.</text>
</comment>
<gene>
    <name evidence="1" type="primary">miaB</name>
    <name type="ordered locus">NTHI0026</name>
</gene>